<name>XRN2_CRYNJ</name>
<protein>
    <recommendedName>
        <fullName>5'-3' exoribonuclease 2</fullName>
        <ecNumber>3.1.13.-</ecNumber>
    </recommendedName>
</protein>
<sequence length="1127" mass="126151">MGVPALFRWLSKKYPKIVERVKEDTPKKIRGPDGEIVEEPIRYENPNPNGFEVDNLYLDMNGIVHPCTHPEGRPAPETEEEMMVEIFKYTERVVNMCRPRKVLMMAIDGVAPRAKMNQQRSRRFRAAQEAADKEEERREAIKLFEAMGHAVSEETANHKSWDTNAITPGTPFMDLLSISLKYWVSHKLTTDPGWKDLKIILSDSSVPGEGEHKIMDWIRRQRSYPTWDANTSHVIYGLDADLIMLSLATHEPHFRVLREDVFAQSSKGPHACKNCGKVGHIAANCKSDKKFKDPNVAEVAKTEDPKPFIFLDVACLREYLAVELVVPGMPFPFDLELAIDDWIFMIFFVGNDFLPHLPSLEIREGAIDVLLKIWRAELPRMGGYLTNHGKVNLDRAQVILEGLAKSEDEIFQKRKDDEERQEHSQKRRRIEEHKRQDEDKAREEDRNTLTLNGTEYVAVDNPAATARGGPLHPSLPSRPAFDLVPKEDAVKQPEDQDQKAKKAMAGSNSDIVKNRKAIRMANMSAAQALKAELEGGNDVNVDDKKAIAQEGKEEDEAVVTVERTEDEEKEQLTKEEARGTLEEQGEKEGVDEEVVPPAIQTDEDEGEAPVGDATVAENDESTTPEDDEDPTHVPRKRKRGDSDGDEDSNEEDDDDDDDDAPPNPEADQPIPKKKLKVNADGTVDYEDDVKLWEPGYRERYYEKKFGVKLSEREFIDKVTKSYMEGLCWVLEYYYQGVPAWDWFYPYHYAPFAQDFRDVGSMDIKFETSIPFKPFAQLLGVFPAASRIHLPEPLQTLMIDEDSPILDFYPPDFEIDMNGKKMAWQGVALLPFIDQNRLLTALKSKEELLSDDEKRRNSWGDNVMFIANENPLYDLFCDKLYGLRAKDPIPIDTKASYGITGSVLPDPNCVPASTFDTPIPSISECPDLNPNDSISVRYYFPRQAHPHRSILLRGYKPEPARLTESDKDWVRRGGQGGRRGHRHNGGGNGNVTGGPGMARGRYESGPPRTNGYQPPPPRSNYGGSSGYGYGAPAPLPSRPPVSSYGGGAGGYGYSNPYAAAPNPYAGGYGAPAPYAAGGYGQRPYVPPLPPPNPYSAPPPAYGRPPGGGYGYGAPPPRGGGYNPYPSRR</sequence>
<dbReference type="EC" id="3.1.13.-"/>
<dbReference type="EMBL" id="AE017346">
    <property type="protein sequence ID" value="AAW44210.1"/>
    <property type="molecule type" value="Genomic_DNA"/>
</dbReference>
<dbReference type="RefSeq" id="XP_571517.1">
    <property type="nucleotide sequence ID" value="XM_571517.1"/>
</dbReference>
<dbReference type="SMR" id="P0CL88"/>
<dbReference type="FunCoup" id="P0CL88">
    <property type="interactions" value="838"/>
</dbReference>
<dbReference type="STRING" id="214684.P0CL88"/>
<dbReference type="PaxDb" id="214684-P0CL88"/>
<dbReference type="eggNOG" id="KOG2044">
    <property type="taxonomic scope" value="Eukaryota"/>
</dbReference>
<dbReference type="HOGENOM" id="CLU_006038_2_1_1"/>
<dbReference type="InParanoid" id="P0CL88"/>
<dbReference type="OMA" id="ITHDMVV"/>
<dbReference type="PHI-base" id="PHI:3330"/>
<dbReference type="Proteomes" id="UP000002149">
    <property type="component" value="Chromosome 6"/>
</dbReference>
<dbReference type="GO" id="GO:0005634">
    <property type="term" value="C:nucleus"/>
    <property type="evidence" value="ECO:0000318"/>
    <property type="project" value="GO_Central"/>
</dbReference>
<dbReference type="GO" id="GO:0004534">
    <property type="term" value="F:5'-3' RNA exonuclease activity"/>
    <property type="evidence" value="ECO:0000318"/>
    <property type="project" value="GO_Central"/>
</dbReference>
<dbReference type="GO" id="GO:0003723">
    <property type="term" value="F:RNA binding"/>
    <property type="evidence" value="ECO:0000318"/>
    <property type="project" value="GO_Central"/>
</dbReference>
<dbReference type="GO" id="GO:0008270">
    <property type="term" value="F:zinc ion binding"/>
    <property type="evidence" value="ECO:0007669"/>
    <property type="project" value="UniProtKB-KW"/>
</dbReference>
<dbReference type="GO" id="GO:0006353">
    <property type="term" value="P:DNA-templated transcription termination"/>
    <property type="evidence" value="ECO:0007669"/>
    <property type="project" value="UniProtKB-KW"/>
</dbReference>
<dbReference type="GO" id="GO:0006397">
    <property type="term" value="P:mRNA processing"/>
    <property type="evidence" value="ECO:0007669"/>
    <property type="project" value="UniProtKB-KW"/>
</dbReference>
<dbReference type="GO" id="GO:0000956">
    <property type="term" value="P:nuclear-transcribed mRNA catabolic process"/>
    <property type="evidence" value="ECO:0000318"/>
    <property type="project" value="GO_Central"/>
</dbReference>
<dbReference type="GO" id="GO:0006364">
    <property type="term" value="P:rRNA processing"/>
    <property type="evidence" value="ECO:0007669"/>
    <property type="project" value="UniProtKB-KW"/>
</dbReference>
<dbReference type="CDD" id="cd18673">
    <property type="entry name" value="PIN_XRN1-2-like"/>
    <property type="match status" value="1"/>
</dbReference>
<dbReference type="FunFam" id="1.25.40.1050:FF:000002">
    <property type="entry name" value="5'-3' exoribonuclease"/>
    <property type="match status" value="1"/>
</dbReference>
<dbReference type="FunFam" id="3.40.50.12390:FF:000003">
    <property type="entry name" value="5'-3' exoribonuclease"/>
    <property type="match status" value="1"/>
</dbReference>
<dbReference type="FunFam" id="3.40.50.12390:FF:000005">
    <property type="entry name" value="5'-3' exoribonuclease 2"/>
    <property type="match status" value="1"/>
</dbReference>
<dbReference type="Gene3D" id="1.25.40.1050">
    <property type="match status" value="1"/>
</dbReference>
<dbReference type="Gene3D" id="3.40.50.12390">
    <property type="match status" value="2"/>
</dbReference>
<dbReference type="InterPro" id="IPR027073">
    <property type="entry name" value="5_3_exoribonuclease"/>
</dbReference>
<dbReference type="InterPro" id="IPR041412">
    <property type="entry name" value="Xrn1_helical"/>
</dbReference>
<dbReference type="InterPro" id="IPR004859">
    <property type="entry name" value="Xrn1_N"/>
</dbReference>
<dbReference type="InterPro" id="IPR017151">
    <property type="entry name" value="Xrn2/3/4"/>
</dbReference>
<dbReference type="InterPro" id="IPR001878">
    <property type="entry name" value="Znf_CCHC"/>
</dbReference>
<dbReference type="InterPro" id="IPR036875">
    <property type="entry name" value="Znf_CCHC_sf"/>
</dbReference>
<dbReference type="PANTHER" id="PTHR12341:SF41">
    <property type="entry name" value="5'-3' EXORIBONUCLEASE 2"/>
    <property type="match status" value="1"/>
</dbReference>
<dbReference type="PANTHER" id="PTHR12341">
    <property type="entry name" value="5'-&gt;3' EXORIBONUCLEASE"/>
    <property type="match status" value="1"/>
</dbReference>
<dbReference type="Pfam" id="PF17846">
    <property type="entry name" value="XRN_M"/>
    <property type="match status" value="2"/>
</dbReference>
<dbReference type="Pfam" id="PF03159">
    <property type="entry name" value="XRN_N"/>
    <property type="match status" value="1"/>
</dbReference>
<dbReference type="Pfam" id="PF00098">
    <property type="entry name" value="zf-CCHC"/>
    <property type="match status" value="1"/>
</dbReference>
<dbReference type="PIRSF" id="PIRSF037239">
    <property type="entry name" value="Exonuclease_Xrn2"/>
    <property type="match status" value="1"/>
</dbReference>
<dbReference type="SMART" id="SM00343">
    <property type="entry name" value="ZnF_C2HC"/>
    <property type="match status" value="1"/>
</dbReference>
<dbReference type="SUPFAM" id="SSF57756">
    <property type="entry name" value="Retrovirus zinc finger-like domains"/>
    <property type="match status" value="1"/>
</dbReference>
<dbReference type="PROSITE" id="PS50158">
    <property type="entry name" value="ZF_CCHC"/>
    <property type="match status" value="1"/>
</dbReference>
<feature type="initiator methionine" description="Removed" evidence="1">
    <location>
        <position position="1"/>
    </location>
</feature>
<feature type="chain" id="PRO_0000249923" description="5'-3' exoribonuclease 2">
    <location>
        <begin position="2"/>
        <end position="1127"/>
    </location>
</feature>
<feature type="zinc finger region" description="CCHC-type" evidence="5">
    <location>
        <begin position="270"/>
        <end position="287"/>
    </location>
</feature>
<feature type="region of interest" description="Disordered" evidence="6">
    <location>
        <begin position="411"/>
        <end position="448"/>
    </location>
</feature>
<feature type="region of interest" description="Disordered" evidence="6">
    <location>
        <begin position="532"/>
        <end position="678"/>
    </location>
</feature>
<feature type="region of interest" description="Disordered" evidence="6">
    <location>
        <begin position="962"/>
        <end position="1033"/>
    </location>
</feature>
<feature type="region of interest" description="Disordered" evidence="6">
    <location>
        <begin position="1069"/>
        <end position="1127"/>
    </location>
</feature>
<feature type="coiled-coil region" evidence="4">
    <location>
        <begin position="121"/>
        <end position="147"/>
    </location>
</feature>
<feature type="coiled-coil region" evidence="4">
    <location>
        <begin position="412"/>
        <end position="441"/>
    </location>
</feature>
<feature type="compositionally biased region" description="Basic and acidic residues" evidence="6">
    <location>
        <begin position="411"/>
        <end position="447"/>
    </location>
</feature>
<feature type="compositionally biased region" description="Basic and acidic residues" evidence="6">
    <location>
        <begin position="541"/>
        <end position="551"/>
    </location>
</feature>
<feature type="compositionally biased region" description="Basic and acidic residues" evidence="6">
    <location>
        <begin position="570"/>
        <end position="588"/>
    </location>
</feature>
<feature type="compositionally biased region" description="Acidic residues" evidence="6">
    <location>
        <begin position="617"/>
        <end position="629"/>
    </location>
</feature>
<feature type="compositionally biased region" description="Acidic residues" evidence="6">
    <location>
        <begin position="643"/>
        <end position="660"/>
    </location>
</feature>
<feature type="compositionally biased region" description="Gly residues" evidence="6">
    <location>
        <begin position="984"/>
        <end position="996"/>
    </location>
</feature>
<feature type="compositionally biased region" description="Pro residues" evidence="6">
    <location>
        <begin position="1083"/>
        <end position="1101"/>
    </location>
</feature>
<proteinExistence type="inferred from homology"/>
<evidence type="ECO:0000250" key="1"/>
<evidence type="ECO:0000250" key="2">
    <source>
        <dbReference type="UniProtKB" id="P40848"/>
    </source>
</evidence>
<evidence type="ECO:0000250" key="3">
    <source>
        <dbReference type="UniProtKB" id="Q02792"/>
    </source>
</evidence>
<evidence type="ECO:0000255" key="4"/>
<evidence type="ECO:0000255" key="5">
    <source>
        <dbReference type="PROSITE-ProRule" id="PRU00047"/>
    </source>
</evidence>
<evidence type="ECO:0000256" key="6">
    <source>
        <dbReference type="SAM" id="MobiDB-lite"/>
    </source>
</evidence>
<evidence type="ECO:0000305" key="7"/>
<keyword id="KW-0175">Coiled coil</keyword>
<keyword id="KW-0269">Exonuclease</keyword>
<keyword id="KW-0378">Hydrolase</keyword>
<keyword id="KW-0479">Metal-binding</keyword>
<keyword id="KW-0507">mRNA processing</keyword>
<keyword id="KW-0540">Nuclease</keyword>
<keyword id="KW-0539">Nucleus</keyword>
<keyword id="KW-1185">Reference proteome</keyword>
<keyword id="KW-0698">rRNA processing</keyword>
<keyword id="KW-0804">Transcription</keyword>
<keyword id="KW-0805">Transcription regulation</keyword>
<keyword id="KW-0806">Transcription termination</keyword>
<keyword id="KW-0862">Zinc</keyword>
<keyword id="KW-0863">Zinc-finger</keyword>
<accession>P0CL88</accession>
<accession>Q55QP9</accession>
<accession>Q5KFG7</accession>
<organism>
    <name type="scientific">Cryptococcus neoformans var. neoformans serotype D (strain JEC21 / ATCC MYA-565)</name>
    <name type="common">Filobasidiella neoformans</name>
    <dbReference type="NCBI Taxonomy" id="214684"/>
    <lineage>
        <taxon>Eukaryota</taxon>
        <taxon>Fungi</taxon>
        <taxon>Dikarya</taxon>
        <taxon>Basidiomycota</taxon>
        <taxon>Agaricomycotina</taxon>
        <taxon>Tremellomycetes</taxon>
        <taxon>Tremellales</taxon>
        <taxon>Cryptococcaceae</taxon>
        <taxon>Cryptococcus</taxon>
        <taxon>Cryptococcus neoformans species complex</taxon>
    </lineage>
</organism>
<reference key="1">
    <citation type="journal article" date="2005" name="Science">
        <title>The genome of the basidiomycetous yeast and human pathogen Cryptococcus neoformans.</title>
        <authorList>
            <person name="Loftus B.J."/>
            <person name="Fung E."/>
            <person name="Roncaglia P."/>
            <person name="Rowley D."/>
            <person name="Amedeo P."/>
            <person name="Bruno D."/>
            <person name="Vamathevan J."/>
            <person name="Miranda M."/>
            <person name="Anderson I.J."/>
            <person name="Fraser J.A."/>
            <person name="Allen J.E."/>
            <person name="Bosdet I.E."/>
            <person name="Brent M.R."/>
            <person name="Chiu R."/>
            <person name="Doering T.L."/>
            <person name="Donlin M.J."/>
            <person name="D'Souza C.A."/>
            <person name="Fox D.S."/>
            <person name="Grinberg V."/>
            <person name="Fu J."/>
            <person name="Fukushima M."/>
            <person name="Haas B.J."/>
            <person name="Huang J.C."/>
            <person name="Janbon G."/>
            <person name="Jones S.J.M."/>
            <person name="Koo H.L."/>
            <person name="Krzywinski M.I."/>
            <person name="Kwon-Chung K.J."/>
            <person name="Lengeler K.B."/>
            <person name="Maiti R."/>
            <person name="Marra M.A."/>
            <person name="Marra R.E."/>
            <person name="Mathewson C.A."/>
            <person name="Mitchell T.G."/>
            <person name="Pertea M."/>
            <person name="Riggs F.R."/>
            <person name="Salzberg S.L."/>
            <person name="Schein J.E."/>
            <person name="Shvartsbeyn A."/>
            <person name="Shin H."/>
            <person name="Shumway M."/>
            <person name="Specht C.A."/>
            <person name="Suh B.B."/>
            <person name="Tenney A."/>
            <person name="Utterback T.R."/>
            <person name="Wickes B.L."/>
            <person name="Wortman J.R."/>
            <person name="Wye N.H."/>
            <person name="Kronstad J.W."/>
            <person name="Lodge J.K."/>
            <person name="Heitman J."/>
            <person name="Davis R.W."/>
            <person name="Fraser C.M."/>
            <person name="Hyman R.W."/>
        </authorList>
    </citation>
    <scope>NUCLEOTIDE SEQUENCE [LARGE SCALE GENOMIC DNA]</scope>
    <source>
        <strain>JEC21 / ATCC MYA-565</strain>
    </source>
</reference>
<comment type="function">
    <text evidence="2 3">Possesses 5'-&gt;3' exoribonuclease activity (By similarity). Required for the processing of nuclear mRNA and rRNA precursors. May promote the termination of transcription by RNA polymerase II (By similarity). Essential for vegetative cell growth and chromosome segregation (By similarity).</text>
</comment>
<comment type="subunit">
    <text evidence="2">Interacts with RAI1; the interaction is direct, stabilizes RAT1 protein structure and may stimulate its exoribonuclease activity (By similarity). The interaction also stimulates RAI1 pyrophosphohydrolase activity, probably by recruiting it to mRNA substrates (By similarity).</text>
</comment>
<comment type="subcellular location">
    <subcellularLocation>
        <location evidence="1">Nucleus</location>
    </subcellularLocation>
</comment>
<comment type="similarity">
    <text evidence="7">Belongs to the 5'-3' exonuclease family. XRN2/RAT1 subfamily.</text>
</comment>
<gene>
    <name type="primary">RAT1</name>
    <name type="ordered locus">CNF01810</name>
</gene>